<comment type="subcellular location">
    <subcellularLocation>
        <location evidence="2">Host membrane</location>
        <topology evidence="2">Single-pass membrane protein</topology>
    </subcellularLocation>
</comment>
<reference key="1">
    <citation type="journal article" date="2001" name="Virology">
        <title>Sequences and replication of genomes of the archaeal rudiviruses SIRV1 and SIRV2: relationships to the archaeal lipothrixvirus SIFV and some eukaryal viruses.</title>
        <authorList>
            <person name="Peng X."/>
            <person name="Blum H."/>
            <person name="She Q."/>
            <person name="Mallok S."/>
            <person name="Bruegger K."/>
            <person name="Garrett R.A."/>
            <person name="Zillig W."/>
            <person name="Prangishvili D."/>
        </authorList>
    </citation>
    <scope>NUCLEOTIDE SEQUENCE [LARGE SCALE GENOMIC DNA]</scope>
    <source>
        <strain>Isolate variant VIII</strain>
    </source>
</reference>
<reference key="2">
    <citation type="journal article" date="2004" name="Mol. Microbiol.">
        <title>Multiple variants of the archaeal DNA rudivirus SIRV1 in a single host and a novel mechanism of genomic variation.</title>
        <authorList>
            <person name="Peng X."/>
            <person name="Kessler A."/>
            <person name="Phan H."/>
            <person name="Garrett R.A."/>
            <person name="Prangishvili D."/>
        </authorList>
    </citation>
    <scope>NUCLEOTIDE SEQUENCE [LARGE SCALE GENOMIC DNA]</scope>
    <source>
        <strain>Isolate variant XX</strain>
    </source>
</reference>
<feature type="signal peptide" evidence="1">
    <location>
        <begin position="1"/>
        <end position="19"/>
    </location>
</feature>
<feature type="chain" id="PRO_0000342310" description="Uncharacterized protein 510">
    <location>
        <begin position="20"/>
        <end position="510"/>
    </location>
</feature>
<feature type="transmembrane region" description="Helical" evidence="1">
    <location>
        <begin position="28"/>
        <end position="48"/>
    </location>
</feature>
<feature type="sequence variant" description="In strain: Isolate variant XX.">
    <location>
        <begin position="1"/>
        <end position="24"/>
    </location>
</feature>
<feature type="sequence variant" description="In strain: Isolate variant XX.">
    <original>V</original>
    <variation>I</variation>
    <location>
        <position position="415"/>
    </location>
</feature>
<feature type="sequence variant" description="In strain: Isolate variant XX.">
    <original>T</original>
    <variation>I</variation>
    <location>
        <position position="419"/>
    </location>
</feature>
<feature type="sequence variant" description="In strain: Isolate variant XX.">
    <original>T</original>
    <variation>N</variation>
    <location>
        <position position="434"/>
    </location>
</feature>
<protein>
    <recommendedName>
        <fullName>Uncharacterized protein 510</fullName>
    </recommendedName>
</protein>
<proteinExistence type="inferred from homology"/>
<sequence length="510" mass="58342">MLILLILYFLFLQLHIFDSFIKSIMYDIYIHYAICKFIFLLEIYKLIAMGKRKGQRNIASMKYHLYNKILNRKSFPAFSVMFDAGVESVLPTPLENIQIPLGINTNYGIAYASIISSLLSALNNLAISVFNPNFNSQTFLNLGQSANFGISNGISLLNNYTSLYDNYVQLCNILYQPAVFDETYFDLSVYQPALATEYQNQSCKKIEQYFSSLTTTNVSVNVTTLGTGITNIPNVDNYMYNNIADTGIIDLLNALNINFNQLPDFAKFIIAFIPDLNSIINNGFALDVGWLDRCVLAPETQNGIQLQNGMILQYFADVFGMILDYTPLDFAVLMPEFNPENVTQDDLIAILSADKTVISIFGNLFKMHLYDPSPGGINIAYSSEIENYAVSYQQFLQIQKIVNKKYSNIWYAKMVASATIEIARYPYQQNYSYTSGKRTLSYQDFLNYWKTKWKFYGLTDQDLQYAQQLGEQLQGQAKIENQIKLAQKSAKTKQYKPIFYYKNFQNIAVR</sequence>
<dbReference type="EMBL" id="AJ414696">
    <property type="protein sequence ID" value="CAC93980.1"/>
    <property type="molecule type" value="Genomic_DNA"/>
</dbReference>
<dbReference type="EMBL" id="AJ748296">
    <property type="protein sequence ID" value="CAG38844.1"/>
    <property type="molecule type" value="Genomic_DNA"/>
</dbReference>
<dbReference type="RefSeq" id="NP_666613.1">
    <property type="nucleotide sequence ID" value="NC_004087.1"/>
</dbReference>
<dbReference type="KEGG" id="vg:951369"/>
<dbReference type="OrthoDB" id="2568at10239"/>
<dbReference type="Proteomes" id="UP000002270">
    <property type="component" value="Genome"/>
</dbReference>
<dbReference type="Proteomes" id="UP000223181">
    <property type="component" value="Segment"/>
</dbReference>
<dbReference type="GO" id="GO:0033644">
    <property type="term" value="C:host cell membrane"/>
    <property type="evidence" value="ECO:0007669"/>
    <property type="project" value="UniProtKB-SubCell"/>
</dbReference>
<dbReference type="GO" id="GO:0016020">
    <property type="term" value="C:membrane"/>
    <property type="evidence" value="ECO:0007669"/>
    <property type="project" value="UniProtKB-KW"/>
</dbReference>
<accession>Q8QL30</accession>
<accession>Q5TJ94</accession>
<gene>
    <name type="ORF">510</name>
</gene>
<name>Y510_SIRV1</name>
<evidence type="ECO:0000255" key="1"/>
<evidence type="ECO:0000305" key="2"/>
<keyword id="KW-1043">Host membrane</keyword>
<keyword id="KW-0472">Membrane</keyword>
<keyword id="KW-1185">Reference proteome</keyword>
<keyword id="KW-0732">Signal</keyword>
<keyword id="KW-0812">Transmembrane</keyword>
<keyword id="KW-1133">Transmembrane helix</keyword>
<organism>
    <name type="scientific">Sulfolobus islandicus rod-shaped virus 1</name>
    <name type="common">SIRV-1</name>
    <name type="synonym">Sulfolobus virus SIRV-1</name>
    <dbReference type="NCBI Taxonomy" id="157898"/>
    <lineage>
        <taxon>Viruses</taxon>
        <taxon>Adnaviria</taxon>
        <taxon>Zilligvirae</taxon>
        <taxon>Taleaviricota</taxon>
        <taxon>Tokiviricetes</taxon>
        <taxon>Ligamenvirales</taxon>
        <taxon>Rudiviridae</taxon>
        <taxon>Icerudivirus</taxon>
        <taxon>Icerudivirus SIRV1</taxon>
    </lineage>
</organism>
<organismHost>
    <name type="scientific">Saccharolobus islandicus</name>
    <name type="common">Sulfolobus islandicus</name>
    <dbReference type="NCBI Taxonomy" id="43080"/>
</organismHost>